<organism>
    <name type="scientific">Xenopus laevis</name>
    <name type="common">African clawed frog</name>
    <dbReference type="NCBI Taxonomy" id="8355"/>
    <lineage>
        <taxon>Eukaryota</taxon>
        <taxon>Metazoa</taxon>
        <taxon>Chordata</taxon>
        <taxon>Craniata</taxon>
        <taxon>Vertebrata</taxon>
        <taxon>Euteleostomi</taxon>
        <taxon>Amphibia</taxon>
        <taxon>Batrachia</taxon>
        <taxon>Anura</taxon>
        <taxon>Pipoidea</taxon>
        <taxon>Pipidae</taxon>
        <taxon>Xenopodinae</taxon>
        <taxon>Xenopus</taxon>
        <taxon>Xenopus</taxon>
    </lineage>
</organism>
<name>LMD1A_XENLA</name>
<reference key="1">
    <citation type="submission" date="2004-06" db="EMBL/GenBank/DDBJ databases">
        <authorList>
            <consortium name="NIH - Xenopus Gene Collection (XGC) project"/>
        </authorList>
    </citation>
    <scope>NUCLEOTIDE SEQUENCE [LARGE SCALE MRNA]</scope>
    <source>
        <tissue>Ovary</tissue>
    </source>
</reference>
<proteinExistence type="inferred from homology"/>
<protein>
    <recommendedName>
        <fullName>N-alpha-acetyltransferase 38-A, NatC auxiliary subunit</fullName>
    </recommendedName>
    <alternativeName>
        <fullName>LSM domain-containing protein 1-A</fullName>
    </alternativeName>
</protein>
<sequence length="113" mass="12329">MAAVLEENGCSRQSSPSAGDSDAEPGDTARHKLESLLNRNMRIEMTDGRSLIGCFLCTDRDCNVILGSAQEFLRPSDSFPVREPRVLGLAMVPGHHIVSIQVELESVTSPQYI</sequence>
<keyword id="KW-0963">Cytoplasm</keyword>
<keyword id="KW-1185">Reference proteome</keyword>
<comment type="function">
    <text evidence="1">Auxillary component of the N-terminal acetyltransferase C (NatC) complex which catalyzes acetylation of N-terminal methionine residues.</text>
</comment>
<comment type="subunit">
    <text evidence="1">Component of the N-terminal acetyltransferase C (NatC) complex, which is composed of naa35, naa38 and naa30.</text>
</comment>
<comment type="subcellular location">
    <subcellularLocation>
        <location evidence="1">Cytoplasm</location>
    </subcellularLocation>
</comment>
<comment type="similarity">
    <text evidence="4">Belongs to the snRNP Sm proteins family.</text>
</comment>
<evidence type="ECO:0000250" key="1"/>
<evidence type="ECO:0000255" key="2">
    <source>
        <dbReference type="PROSITE-ProRule" id="PRU01346"/>
    </source>
</evidence>
<evidence type="ECO:0000256" key="3">
    <source>
        <dbReference type="SAM" id="MobiDB-lite"/>
    </source>
</evidence>
<evidence type="ECO:0000305" key="4"/>
<gene>
    <name type="primary">naa38-a</name>
    <name type="synonym">lsmd1-a</name>
</gene>
<feature type="chain" id="PRO_0000299158" description="N-alpha-acetyltransferase 38-A, NatC auxiliary subunit">
    <location>
        <begin position="1"/>
        <end position="113"/>
    </location>
</feature>
<feature type="domain" description="Sm" evidence="2">
    <location>
        <begin position="28"/>
        <end position="106"/>
    </location>
</feature>
<feature type="region of interest" description="Disordered" evidence="3">
    <location>
        <begin position="1"/>
        <end position="29"/>
    </location>
</feature>
<dbReference type="EMBL" id="BC072881">
    <property type="protein sequence ID" value="AAH72881.1"/>
    <property type="molecule type" value="mRNA"/>
</dbReference>
<dbReference type="RefSeq" id="NP_001085519.1">
    <property type="nucleotide sequence ID" value="NM_001092050.1"/>
</dbReference>
<dbReference type="SMR" id="Q6GQ67"/>
<dbReference type="DNASU" id="443945"/>
<dbReference type="GeneID" id="443945"/>
<dbReference type="KEGG" id="xla:443945"/>
<dbReference type="AGR" id="Xenbase:XB-GENE-6251521"/>
<dbReference type="CTD" id="443945"/>
<dbReference type="Xenbase" id="XB-GENE-6251521">
    <property type="gene designation" value="naa38.L"/>
</dbReference>
<dbReference type="OMA" id="THEYRCP"/>
<dbReference type="OrthoDB" id="368909at2759"/>
<dbReference type="Proteomes" id="UP000186698">
    <property type="component" value="Chromosome 3L"/>
</dbReference>
<dbReference type="Bgee" id="443945">
    <property type="expression patterns" value="Expressed in oocyte and 19 other cell types or tissues"/>
</dbReference>
<dbReference type="GO" id="GO:0005737">
    <property type="term" value="C:cytoplasm"/>
    <property type="evidence" value="ECO:0000250"/>
    <property type="project" value="UniProtKB"/>
</dbReference>
<dbReference type="GO" id="GO:0031417">
    <property type="term" value="C:NatC complex"/>
    <property type="evidence" value="ECO:0000250"/>
    <property type="project" value="UniProtKB"/>
</dbReference>
<dbReference type="GO" id="GO:0005634">
    <property type="term" value="C:nucleus"/>
    <property type="evidence" value="ECO:0000250"/>
    <property type="project" value="UniProtKB"/>
</dbReference>
<dbReference type="GO" id="GO:0003723">
    <property type="term" value="F:RNA binding"/>
    <property type="evidence" value="ECO:0007669"/>
    <property type="project" value="InterPro"/>
</dbReference>
<dbReference type="GO" id="GO:0043066">
    <property type="term" value="P:negative regulation of apoptotic process"/>
    <property type="evidence" value="ECO:0000250"/>
    <property type="project" value="UniProtKB"/>
</dbReference>
<dbReference type="CDD" id="cd06168">
    <property type="entry name" value="LSMD1"/>
    <property type="match status" value="1"/>
</dbReference>
<dbReference type="FunFam" id="2.30.30.100:FF:000028">
    <property type="entry name" value="N-alpha-acetyltransferase 38, NatC auxiliary subunit"/>
    <property type="match status" value="1"/>
</dbReference>
<dbReference type="Gene3D" id="2.30.30.100">
    <property type="match status" value="1"/>
</dbReference>
<dbReference type="InterPro" id="IPR010920">
    <property type="entry name" value="LSM_dom_sf"/>
</dbReference>
<dbReference type="InterPro" id="IPR034110">
    <property type="entry name" value="LSMD1_Sm"/>
</dbReference>
<dbReference type="InterPro" id="IPR047575">
    <property type="entry name" value="Sm"/>
</dbReference>
<dbReference type="InterPro" id="IPR001163">
    <property type="entry name" value="Sm_dom_euk/arc"/>
</dbReference>
<dbReference type="InterPro" id="IPR050914">
    <property type="entry name" value="snRNP_SmB/NAA38-like"/>
</dbReference>
<dbReference type="PANTHER" id="PTHR10701:SF5">
    <property type="entry name" value="N-ALPHA-ACETYLTRANSFERASE 38, NATC AUXILIARY SUBUNIT"/>
    <property type="match status" value="1"/>
</dbReference>
<dbReference type="PANTHER" id="PTHR10701">
    <property type="entry name" value="SMALL NUCLEAR RIBONUCLEOPROTEIN-ASSOCIATED PROTEIN B AND N"/>
    <property type="match status" value="1"/>
</dbReference>
<dbReference type="Pfam" id="PF01423">
    <property type="entry name" value="LSM"/>
    <property type="match status" value="1"/>
</dbReference>
<dbReference type="SMART" id="SM00651">
    <property type="entry name" value="Sm"/>
    <property type="match status" value="1"/>
</dbReference>
<dbReference type="SUPFAM" id="SSF50182">
    <property type="entry name" value="Sm-like ribonucleoproteins"/>
    <property type="match status" value="1"/>
</dbReference>
<dbReference type="PROSITE" id="PS52002">
    <property type="entry name" value="SM"/>
    <property type="match status" value="1"/>
</dbReference>
<accession>Q6GQ67</accession>